<proteinExistence type="inferred from homology"/>
<accession>Q89Q71</accession>
<dbReference type="EMBL" id="BA000040">
    <property type="protein sequence ID" value="BAC48524.1"/>
    <property type="molecule type" value="Genomic_DNA"/>
</dbReference>
<dbReference type="RefSeq" id="NP_769899.1">
    <property type="nucleotide sequence ID" value="NC_004463.1"/>
</dbReference>
<dbReference type="RefSeq" id="WP_011086043.1">
    <property type="nucleotide sequence ID" value="NC_004463.1"/>
</dbReference>
<dbReference type="SMR" id="Q89Q71"/>
<dbReference type="STRING" id="224911.AAV28_13330"/>
<dbReference type="EnsemblBacteria" id="BAC48524">
    <property type="protein sequence ID" value="BAC48524"/>
    <property type="gene ID" value="BAC48524"/>
</dbReference>
<dbReference type="GeneID" id="46490294"/>
<dbReference type="KEGG" id="bja:bll3259"/>
<dbReference type="PATRIC" id="fig|224911.44.peg.2904"/>
<dbReference type="eggNOG" id="COG1492">
    <property type="taxonomic scope" value="Bacteria"/>
</dbReference>
<dbReference type="HOGENOM" id="CLU_019250_2_2_5"/>
<dbReference type="InParanoid" id="Q89Q71"/>
<dbReference type="OrthoDB" id="9808302at2"/>
<dbReference type="PhylomeDB" id="Q89Q71"/>
<dbReference type="UniPathway" id="UPA00148"/>
<dbReference type="Proteomes" id="UP000002526">
    <property type="component" value="Chromosome"/>
</dbReference>
<dbReference type="GO" id="GO:0015420">
    <property type="term" value="F:ABC-type vitamin B12 transporter activity"/>
    <property type="evidence" value="ECO:0007669"/>
    <property type="project" value="UniProtKB-UniRule"/>
</dbReference>
<dbReference type="GO" id="GO:0003824">
    <property type="term" value="F:catalytic activity"/>
    <property type="evidence" value="ECO:0007669"/>
    <property type="project" value="InterPro"/>
</dbReference>
<dbReference type="GO" id="GO:0009236">
    <property type="term" value="P:cobalamin biosynthetic process"/>
    <property type="evidence" value="ECO:0007669"/>
    <property type="project" value="UniProtKB-UniRule"/>
</dbReference>
<dbReference type="CDD" id="cd01750">
    <property type="entry name" value="GATase1_CobQ"/>
    <property type="match status" value="1"/>
</dbReference>
<dbReference type="Gene3D" id="3.40.50.880">
    <property type="match status" value="1"/>
</dbReference>
<dbReference type="Gene3D" id="3.40.50.300">
    <property type="entry name" value="P-loop containing nucleotide triphosphate hydrolases"/>
    <property type="match status" value="1"/>
</dbReference>
<dbReference type="HAMAP" id="MF_00028">
    <property type="entry name" value="CobQ"/>
    <property type="match status" value="1"/>
</dbReference>
<dbReference type="InterPro" id="IPR029062">
    <property type="entry name" value="Class_I_gatase-like"/>
</dbReference>
<dbReference type="InterPro" id="IPR002586">
    <property type="entry name" value="CobQ/CobB/MinD/ParA_Nub-bd_dom"/>
</dbReference>
<dbReference type="InterPro" id="IPR033949">
    <property type="entry name" value="CobQ_GATase1"/>
</dbReference>
<dbReference type="InterPro" id="IPR004459">
    <property type="entry name" value="CobQ_synth"/>
</dbReference>
<dbReference type="InterPro" id="IPR011698">
    <property type="entry name" value="GATase_3"/>
</dbReference>
<dbReference type="InterPro" id="IPR027417">
    <property type="entry name" value="P-loop_NTPase"/>
</dbReference>
<dbReference type="NCBIfam" id="TIGR00313">
    <property type="entry name" value="cobQ"/>
    <property type="match status" value="1"/>
</dbReference>
<dbReference type="NCBIfam" id="NF001989">
    <property type="entry name" value="PRK00784.1"/>
    <property type="match status" value="1"/>
</dbReference>
<dbReference type="PANTHER" id="PTHR21343:SF1">
    <property type="entry name" value="COBYRIC ACID SYNTHASE"/>
    <property type="match status" value="1"/>
</dbReference>
<dbReference type="PANTHER" id="PTHR21343">
    <property type="entry name" value="DETHIOBIOTIN SYNTHETASE"/>
    <property type="match status" value="1"/>
</dbReference>
<dbReference type="Pfam" id="PF01656">
    <property type="entry name" value="CbiA"/>
    <property type="match status" value="1"/>
</dbReference>
<dbReference type="Pfam" id="PF07685">
    <property type="entry name" value="GATase_3"/>
    <property type="match status" value="1"/>
</dbReference>
<dbReference type="SUPFAM" id="SSF52317">
    <property type="entry name" value="Class I glutamine amidotransferase-like"/>
    <property type="match status" value="1"/>
</dbReference>
<dbReference type="SUPFAM" id="SSF52540">
    <property type="entry name" value="P-loop containing nucleoside triphosphate hydrolases"/>
    <property type="match status" value="1"/>
</dbReference>
<dbReference type="PROSITE" id="PS51274">
    <property type="entry name" value="GATASE_COBBQ"/>
    <property type="match status" value="1"/>
</dbReference>
<organism>
    <name type="scientific">Bradyrhizobium diazoefficiens (strain JCM 10833 / BCRC 13528 / IAM 13628 / NBRC 14792 / USDA 110)</name>
    <dbReference type="NCBI Taxonomy" id="224911"/>
    <lineage>
        <taxon>Bacteria</taxon>
        <taxon>Pseudomonadati</taxon>
        <taxon>Pseudomonadota</taxon>
        <taxon>Alphaproteobacteria</taxon>
        <taxon>Hyphomicrobiales</taxon>
        <taxon>Nitrobacteraceae</taxon>
        <taxon>Bradyrhizobium</taxon>
    </lineage>
</organism>
<evidence type="ECO:0000255" key="1">
    <source>
        <dbReference type="HAMAP-Rule" id="MF_00028"/>
    </source>
</evidence>
<gene>
    <name evidence="1" type="primary">cobQ</name>
    <name type="ordered locus">bll3259</name>
</gene>
<keyword id="KW-0169">Cobalamin biosynthesis</keyword>
<keyword id="KW-0315">Glutamine amidotransferase</keyword>
<keyword id="KW-1185">Reference proteome</keyword>
<reference key="1">
    <citation type="journal article" date="2002" name="DNA Res.">
        <title>Complete genomic sequence of nitrogen-fixing symbiotic bacterium Bradyrhizobium japonicum USDA110.</title>
        <authorList>
            <person name="Kaneko T."/>
            <person name="Nakamura Y."/>
            <person name="Sato S."/>
            <person name="Minamisawa K."/>
            <person name="Uchiumi T."/>
            <person name="Sasamoto S."/>
            <person name="Watanabe A."/>
            <person name="Idesawa K."/>
            <person name="Iriguchi M."/>
            <person name="Kawashima K."/>
            <person name="Kohara M."/>
            <person name="Matsumoto M."/>
            <person name="Shimpo S."/>
            <person name="Tsuruoka H."/>
            <person name="Wada T."/>
            <person name="Yamada M."/>
            <person name="Tabata S."/>
        </authorList>
    </citation>
    <scope>NUCLEOTIDE SEQUENCE [LARGE SCALE GENOMIC DNA]</scope>
    <source>
        <strain>JCM 10833 / BCRC 13528 / IAM 13628 / NBRC 14792 / USDA 110</strain>
    </source>
</reference>
<name>COBQ_BRADU</name>
<feature type="chain" id="PRO_0000141289" description="Cobyric acid synthase">
    <location>
        <begin position="1"/>
        <end position="482"/>
    </location>
</feature>
<feature type="domain" description="GATase cobBQ-type" evidence="1">
    <location>
        <begin position="249"/>
        <end position="436"/>
    </location>
</feature>
<feature type="active site" description="Nucleophile" evidence="1">
    <location>
        <position position="331"/>
    </location>
</feature>
<feature type="active site" evidence="1">
    <location>
        <position position="428"/>
    </location>
</feature>
<comment type="function">
    <text evidence="1">Catalyzes amidations at positions B, D, E, and G on adenosylcobyrinic A,C-diamide. NH(2) groups are provided by glutamine, and one molecule of ATP is hydrogenolyzed for each amidation.</text>
</comment>
<comment type="pathway">
    <text evidence="1">Cofactor biosynthesis; adenosylcobalamin biosynthesis.</text>
</comment>
<comment type="similarity">
    <text evidence="1">Belongs to the CobB/CobQ family. CobQ subfamily.</text>
</comment>
<protein>
    <recommendedName>
        <fullName evidence="1">Cobyric acid synthase</fullName>
    </recommendedName>
</protein>
<sequence length="482" mass="51280">MARALMIQGAGSDVGKSLIVAGLARAFTRRGLRVLPFKPQNMSNNAAVTVDGGEIGRAQALQALAAGVEPHTDMNPVLLKPETDVGAQVVVHGKRIATARAREYAAMKPSLMGAVLESFERLKARADLVLVEGAGSPAEVNLRKADIANMGFARKADVPVVLIGDIDRGGVIAQLVGIKTVIDPDDAAMIQGFVINKFRGDPTLFDDGYKLIEAKTAWRGFGVLPWFARAGELPAEDALGLSDARKPGQCKIACLALSRIANFDDLDPLKLEAAVDLVMVRPGEAIPGDVRLVIIPGSKSTRGDLAFLRAQGWDIDLLAHYRRGGHVLGLCGGYQMLGRSVADPDGIEGPAGDTPGLGLLDVQTVMSPQKTLTRVTAVHAATNQPIQAYEIHIGRTDGPDRARPFAKLNGEPEGAISSDGRVQGSYLHGLFTSDDFRKAFLTKLDIPAGDEPYHSRVESALDALADHIEKHLDVEGLLSLAR</sequence>